<protein>
    <recommendedName>
        <fullName evidence="1">ATP synthase subunit a, chloroplastic</fullName>
    </recommendedName>
    <alternativeName>
        <fullName evidence="1">ATP synthase F0 sector subunit a</fullName>
    </alternativeName>
    <alternativeName>
        <fullName evidence="1">F-ATPase subunit IV</fullName>
    </alternativeName>
</protein>
<proteinExistence type="inferred from homology"/>
<feature type="chain" id="PRO_0000362582" description="ATP synthase subunit a, chloroplastic">
    <location>
        <begin position="1"/>
        <end position="247"/>
    </location>
</feature>
<feature type="transmembrane region" description="Helical" evidence="1">
    <location>
        <begin position="38"/>
        <end position="58"/>
    </location>
</feature>
<feature type="transmembrane region" description="Helical" evidence="1">
    <location>
        <begin position="95"/>
        <end position="115"/>
    </location>
</feature>
<feature type="transmembrane region" description="Helical" evidence="1">
    <location>
        <begin position="134"/>
        <end position="154"/>
    </location>
</feature>
<feature type="transmembrane region" description="Helical" evidence="1">
    <location>
        <begin position="199"/>
        <end position="219"/>
    </location>
</feature>
<feature type="transmembrane region" description="Helical" evidence="1">
    <location>
        <begin position="220"/>
        <end position="240"/>
    </location>
</feature>
<organism>
    <name type="scientific">Oenothera glazioviana</name>
    <name type="common">Large-flowered evening primrose</name>
    <name type="synonym">Oenothera erythrosepala</name>
    <dbReference type="NCBI Taxonomy" id="482428"/>
    <lineage>
        <taxon>Eukaryota</taxon>
        <taxon>Viridiplantae</taxon>
        <taxon>Streptophyta</taxon>
        <taxon>Embryophyta</taxon>
        <taxon>Tracheophyta</taxon>
        <taxon>Spermatophyta</taxon>
        <taxon>Magnoliopsida</taxon>
        <taxon>eudicotyledons</taxon>
        <taxon>Gunneridae</taxon>
        <taxon>Pentapetalae</taxon>
        <taxon>rosids</taxon>
        <taxon>malvids</taxon>
        <taxon>Myrtales</taxon>
        <taxon>Onagraceae</taxon>
        <taxon>Onagroideae</taxon>
        <taxon>Onagreae</taxon>
        <taxon>Oenothera</taxon>
    </lineage>
</organism>
<sequence>MDVLSCSNNTLKGLYDISGVEVGQHFYWQIGGFQVHGQVLITSWVVIAILLGSASIAVRNPQTIPNDSQNFFEYILEFIRDVSKTQIGEEYGPWVPFIGTMFLFIFVSNWSGALLPWKLVELPHGELAAPTNDINTTVALALLTSVAYFYAGLSKKGLGYFSKYIQPTPILLPINILEDFTKPLSLSFRLFGNILADELVVVVLVSLVPSVVPIPVMFLGLFTSGIQALIFATLAAAYIGESMEGHH</sequence>
<dbReference type="EMBL" id="EU262890">
    <property type="protein sequence ID" value="ABX10040.1"/>
    <property type="molecule type" value="Genomic_DNA"/>
</dbReference>
<dbReference type="RefSeq" id="YP_001687286.1">
    <property type="nucleotide sequence ID" value="NC_010360.2"/>
</dbReference>
<dbReference type="SMR" id="B0Z547"/>
<dbReference type="GeneID" id="5955326"/>
<dbReference type="GO" id="GO:0009535">
    <property type="term" value="C:chloroplast thylakoid membrane"/>
    <property type="evidence" value="ECO:0007669"/>
    <property type="project" value="UniProtKB-SubCell"/>
</dbReference>
<dbReference type="GO" id="GO:0005886">
    <property type="term" value="C:plasma membrane"/>
    <property type="evidence" value="ECO:0007669"/>
    <property type="project" value="UniProtKB-UniRule"/>
</dbReference>
<dbReference type="GO" id="GO:0045259">
    <property type="term" value="C:proton-transporting ATP synthase complex"/>
    <property type="evidence" value="ECO:0007669"/>
    <property type="project" value="UniProtKB-KW"/>
</dbReference>
<dbReference type="GO" id="GO:0046933">
    <property type="term" value="F:proton-transporting ATP synthase activity, rotational mechanism"/>
    <property type="evidence" value="ECO:0007669"/>
    <property type="project" value="UniProtKB-UniRule"/>
</dbReference>
<dbReference type="CDD" id="cd00310">
    <property type="entry name" value="ATP-synt_Fo_a_6"/>
    <property type="match status" value="1"/>
</dbReference>
<dbReference type="FunFam" id="1.20.120.220:FF:000001">
    <property type="entry name" value="ATP synthase subunit a, chloroplastic"/>
    <property type="match status" value="1"/>
</dbReference>
<dbReference type="Gene3D" id="1.20.120.220">
    <property type="entry name" value="ATP synthase, F0 complex, subunit A"/>
    <property type="match status" value="1"/>
</dbReference>
<dbReference type="HAMAP" id="MF_01393">
    <property type="entry name" value="ATP_synth_a_bact"/>
    <property type="match status" value="1"/>
</dbReference>
<dbReference type="InterPro" id="IPR045082">
    <property type="entry name" value="ATP_syn_F0_a_bact/chloroplast"/>
</dbReference>
<dbReference type="InterPro" id="IPR000568">
    <property type="entry name" value="ATP_synth_F0_asu"/>
</dbReference>
<dbReference type="InterPro" id="IPR023011">
    <property type="entry name" value="ATP_synth_F0_asu_AS"/>
</dbReference>
<dbReference type="InterPro" id="IPR035908">
    <property type="entry name" value="F0_ATP_A_sf"/>
</dbReference>
<dbReference type="NCBIfam" id="TIGR01131">
    <property type="entry name" value="ATP_synt_6_or_A"/>
    <property type="match status" value="1"/>
</dbReference>
<dbReference type="PANTHER" id="PTHR42823">
    <property type="entry name" value="ATP SYNTHASE SUBUNIT A, CHLOROPLASTIC"/>
    <property type="match status" value="1"/>
</dbReference>
<dbReference type="PANTHER" id="PTHR42823:SF3">
    <property type="entry name" value="ATP SYNTHASE SUBUNIT A, CHLOROPLASTIC"/>
    <property type="match status" value="1"/>
</dbReference>
<dbReference type="Pfam" id="PF00119">
    <property type="entry name" value="ATP-synt_A"/>
    <property type="match status" value="1"/>
</dbReference>
<dbReference type="PRINTS" id="PR00123">
    <property type="entry name" value="ATPASEA"/>
</dbReference>
<dbReference type="SUPFAM" id="SSF81336">
    <property type="entry name" value="F1F0 ATP synthase subunit A"/>
    <property type="match status" value="1"/>
</dbReference>
<dbReference type="PROSITE" id="PS00449">
    <property type="entry name" value="ATPASE_A"/>
    <property type="match status" value="1"/>
</dbReference>
<comment type="function">
    <text evidence="1">Key component of the proton channel; it plays a direct role in the translocation of protons across the membrane.</text>
</comment>
<comment type="subunit">
    <text evidence="1">F-type ATPases have 2 components, CF(1) - the catalytic core - and CF(0) - the membrane proton channel. CF(1) has five subunits: alpha(3), beta(3), gamma(1), delta(1), epsilon(1). CF(0) has four main subunits: a, b, b' and c.</text>
</comment>
<comment type="subcellular location">
    <subcellularLocation>
        <location evidence="1">Plastid</location>
        <location evidence="1">Chloroplast thylakoid membrane</location>
        <topology evidence="1">Multi-pass membrane protein</topology>
    </subcellularLocation>
</comment>
<comment type="similarity">
    <text evidence="1">Belongs to the ATPase A chain family.</text>
</comment>
<accession>B0Z547</accession>
<geneLocation type="chloroplast"/>
<gene>
    <name evidence="1" type="primary">atpI</name>
</gene>
<keyword id="KW-0066">ATP synthesis</keyword>
<keyword id="KW-0138">CF(0)</keyword>
<keyword id="KW-0150">Chloroplast</keyword>
<keyword id="KW-0375">Hydrogen ion transport</keyword>
<keyword id="KW-0406">Ion transport</keyword>
<keyword id="KW-0472">Membrane</keyword>
<keyword id="KW-0934">Plastid</keyword>
<keyword id="KW-0793">Thylakoid</keyword>
<keyword id="KW-0812">Transmembrane</keyword>
<keyword id="KW-1133">Transmembrane helix</keyword>
<keyword id="KW-0813">Transport</keyword>
<evidence type="ECO:0000255" key="1">
    <source>
        <dbReference type="HAMAP-Rule" id="MF_01393"/>
    </source>
</evidence>
<reference key="1">
    <citation type="journal article" date="2008" name="Nucleic Acids Res.">
        <title>The complete nucleotide sequences of the five genetically distinct plastid genomes of Oenothera, subsection Oenothera: I. Sequence evaluation and plastome evolution.</title>
        <authorList>
            <person name="Greiner S."/>
            <person name="Wang X."/>
            <person name="Rauwolf U."/>
            <person name="Silber M.V."/>
            <person name="Mayer K."/>
            <person name="Meurer J."/>
            <person name="Haberer G."/>
            <person name="Herrmann R.G."/>
        </authorList>
    </citation>
    <scope>NUCLEOTIDE SEQUENCE [LARGE SCALE GENOMIC DNA]</scope>
    <source>
        <strain>cv. Rr-lamarckiana Sweden</strain>
    </source>
</reference>
<name>ATPI_OENGL</name>